<comment type="function">
    <text evidence="1">Converts heme B (protoheme IX) to heme O by substitution of the vinyl group on carbon 2 of heme B porphyrin ring with a hydroxyethyl farnesyl side group.</text>
</comment>
<comment type="catalytic activity">
    <reaction evidence="1">
        <text>heme b + (2E,6E)-farnesyl diphosphate + H2O = Fe(II)-heme o + diphosphate</text>
        <dbReference type="Rhea" id="RHEA:28070"/>
        <dbReference type="ChEBI" id="CHEBI:15377"/>
        <dbReference type="ChEBI" id="CHEBI:33019"/>
        <dbReference type="ChEBI" id="CHEBI:60344"/>
        <dbReference type="ChEBI" id="CHEBI:60530"/>
        <dbReference type="ChEBI" id="CHEBI:175763"/>
        <dbReference type="EC" id="2.5.1.141"/>
    </reaction>
</comment>
<comment type="pathway">
    <text evidence="1">Porphyrin-containing compound metabolism; heme O biosynthesis; heme O from protoheme: step 1/1.</text>
</comment>
<comment type="subcellular location">
    <subcellularLocation>
        <location evidence="1">Cell inner membrane</location>
        <topology evidence="1">Multi-pass membrane protein</topology>
    </subcellularLocation>
</comment>
<comment type="miscellaneous">
    <text evidence="1">Carbon 2 of the heme B porphyrin ring is defined according to the Fischer nomenclature.</text>
</comment>
<comment type="similarity">
    <text evidence="1">Belongs to the UbiA prenyltransferase family. Protoheme IX farnesyltransferase subfamily.</text>
</comment>
<accession>B8GPF3</accession>
<evidence type="ECO:0000255" key="1">
    <source>
        <dbReference type="HAMAP-Rule" id="MF_00154"/>
    </source>
</evidence>
<protein>
    <recommendedName>
        <fullName evidence="1">Protoheme IX farnesyltransferase</fullName>
        <ecNumber evidence="1">2.5.1.141</ecNumber>
    </recommendedName>
    <alternativeName>
        <fullName evidence="1">Heme B farnesyltransferase</fullName>
    </alternativeName>
    <alternativeName>
        <fullName evidence="1">Heme O synthase</fullName>
    </alternativeName>
</protein>
<keyword id="KW-0997">Cell inner membrane</keyword>
<keyword id="KW-1003">Cell membrane</keyword>
<keyword id="KW-0350">Heme biosynthesis</keyword>
<keyword id="KW-0472">Membrane</keyword>
<keyword id="KW-1185">Reference proteome</keyword>
<keyword id="KW-0808">Transferase</keyword>
<keyword id="KW-0812">Transmembrane</keyword>
<keyword id="KW-1133">Transmembrane helix</keyword>
<gene>
    <name evidence="1" type="primary">cyoE</name>
    <name type="ordered locus">Tgr7_3003</name>
</gene>
<dbReference type="EC" id="2.5.1.141" evidence="1"/>
<dbReference type="EMBL" id="CP001339">
    <property type="protein sequence ID" value="ACL74073.1"/>
    <property type="molecule type" value="Genomic_DNA"/>
</dbReference>
<dbReference type="RefSeq" id="WP_012639536.1">
    <property type="nucleotide sequence ID" value="NC_011901.1"/>
</dbReference>
<dbReference type="SMR" id="B8GPF3"/>
<dbReference type="STRING" id="396588.Tgr7_3003"/>
<dbReference type="KEGG" id="tgr:Tgr7_3003"/>
<dbReference type="eggNOG" id="COG0109">
    <property type="taxonomic scope" value="Bacteria"/>
</dbReference>
<dbReference type="HOGENOM" id="CLU_029631_0_2_6"/>
<dbReference type="OrthoDB" id="9814417at2"/>
<dbReference type="UniPathway" id="UPA00834">
    <property type="reaction ID" value="UER00712"/>
</dbReference>
<dbReference type="Proteomes" id="UP000002383">
    <property type="component" value="Chromosome"/>
</dbReference>
<dbReference type="GO" id="GO:0005886">
    <property type="term" value="C:plasma membrane"/>
    <property type="evidence" value="ECO:0007669"/>
    <property type="project" value="UniProtKB-SubCell"/>
</dbReference>
<dbReference type="GO" id="GO:0008495">
    <property type="term" value="F:protoheme IX farnesyltransferase activity"/>
    <property type="evidence" value="ECO:0007669"/>
    <property type="project" value="UniProtKB-UniRule"/>
</dbReference>
<dbReference type="GO" id="GO:0048034">
    <property type="term" value="P:heme O biosynthetic process"/>
    <property type="evidence" value="ECO:0007669"/>
    <property type="project" value="UniProtKB-UniRule"/>
</dbReference>
<dbReference type="CDD" id="cd13957">
    <property type="entry name" value="PT_UbiA_Cox10"/>
    <property type="match status" value="1"/>
</dbReference>
<dbReference type="FunFam" id="1.10.357.140:FF:000001">
    <property type="entry name" value="Protoheme IX farnesyltransferase"/>
    <property type="match status" value="1"/>
</dbReference>
<dbReference type="Gene3D" id="1.10.357.140">
    <property type="entry name" value="UbiA prenyltransferase"/>
    <property type="match status" value="1"/>
</dbReference>
<dbReference type="HAMAP" id="MF_00154">
    <property type="entry name" value="CyoE_CtaB"/>
    <property type="match status" value="1"/>
</dbReference>
<dbReference type="InterPro" id="IPR006369">
    <property type="entry name" value="Protohaem_IX_farnesylTrfase"/>
</dbReference>
<dbReference type="InterPro" id="IPR000537">
    <property type="entry name" value="UbiA_prenyltransferase"/>
</dbReference>
<dbReference type="InterPro" id="IPR030470">
    <property type="entry name" value="UbiA_prenylTrfase_CS"/>
</dbReference>
<dbReference type="InterPro" id="IPR044878">
    <property type="entry name" value="UbiA_sf"/>
</dbReference>
<dbReference type="NCBIfam" id="TIGR01473">
    <property type="entry name" value="cyoE_ctaB"/>
    <property type="match status" value="1"/>
</dbReference>
<dbReference type="NCBIfam" id="NF003349">
    <property type="entry name" value="PRK04375.1-2"/>
    <property type="match status" value="1"/>
</dbReference>
<dbReference type="PANTHER" id="PTHR43448:SF7">
    <property type="entry name" value="4-HYDROXYBENZOATE SOLANESYLTRANSFERASE"/>
    <property type="match status" value="1"/>
</dbReference>
<dbReference type="PANTHER" id="PTHR43448">
    <property type="entry name" value="PROTOHEME IX FARNESYLTRANSFERASE, MITOCHONDRIAL"/>
    <property type="match status" value="1"/>
</dbReference>
<dbReference type="Pfam" id="PF01040">
    <property type="entry name" value="UbiA"/>
    <property type="match status" value="1"/>
</dbReference>
<dbReference type="PROSITE" id="PS00943">
    <property type="entry name" value="UBIA"/>
    <property type="match status" value="1"/>
</dbReference>
<name>CYOE_THISH</name>
<feature type="chain" id="PRO_1000203466" description="Protoheme IX farnesyltransferase">
    <location>
        <begin position="1"/>
        <end position="302"/>
    </location>
</feature>
<feature type="transmembrane region" description="Helical" evidence="1">
    <location>
        <begin position="27"/>
        <end position="47"/>
    </location>
</feature>
<feature type="transmembrane region" description="Helical" evidence="1">
    <location>
        <begin position="53"/>
        <end position="73"/>
    </location>
</feature>
<feature type="transmembrane region" description="Helical" evidence="1">
    <location>
        <begin position="100"/>
        <end position="120"/>
    </location>
</feature>
<feature type="transmembrane region" description="Helical" evidence="1">
    <location>
        <begin position="121"/>
        <end position="141"/>
    </location>
</feature>
<feature type="transmembrane region" description="Helical" evidence="1">
    <location>
        <begin position="149"/>
        <end position="169"/>
    </location>
</feature>
<feature type="transmembrane region" description="Helical" evidence="1">
    <location>
        <begin position="175"/>
        <end position="195"/>
    </location>
</feature>
<feature type="transmembrane region" description="Helical" evidence="1">
    <location>
        <begin position="215"/>
        <end position="235"/>
    </location>
</feature>
<feature type="transmembrane region" description="Helical" evidence="1">
    <location>
        <begin position="237"/>
        <end position="257"/>
    </location>
</feature>
<feature type="transmembrane region" description="Helical" evidence="1">
    <location>
        <begin position="273"/>
        <end position="293"/>
    </location>
</feature>
<sequence>MAIADLTLSKSHAGSWRRYYELGKPKVVALILFTALVGMLLSVPGMVPWHTMLFGLLGIGLAAASGAALNHVIDRRIDAVMDRTRNRPLPTGQLETQKALVFAIAMGVVAMGILVLAVNVLTAVLTFFALIGYAVIYTVFLKRTTPQNIVWGGLAGALPPLLGWVAVTGQITVEPLLLVLLIFVWTPPHFWALAIRRREDYARAGIPMLPVTHGVAFTKLQVLLYTLMLLTVSLVPFIIHMTGLIYLVGALALGIGFVFHAYRLWRSPDDRYAMPTFGYSIFYLTAMFALLLVDHYVRMMMA</sequence>
<organism>
    <name type="scientific">Thioalkalivibrio sulfidiphilus (strain HL-EbGR7)</name>
    <dbReference type="NCBI Taxonomy" id="396588"/>
    <lineage>
        <taxon>Bacteria</taxon>
        <taxon>Pseudomonadati</taxon>
        <taxon>Pseudomonadota</taxon>
        <taxon>Gammaproteobacteria</taxon>
        <taxon>Chromatiales</taxon>
        <taxon>Ectothiorhodospiraceae</taxon>
        <taxon>Thioalkalivibrio</taxon>
    </lineage>
</organism>
<proteinExistence type="inferred from homology"/>
<reference key="1">
    <citation type="journal article" date="2011" name="Stand. Genomic Sci.">
        <title>Complete genome sequence of 'Thioalkalivibrio sulfidophilus' HL-EbGr7.</title>
        <authorList>
            <person name="Muyzer G."/>
            <person name="Sorokin D.Y."/>
            <person name="Mavromatis K."/>
            <person name="Lapidus A."/>
            <person name="Clum A."/>
            <person name="Ivanova N."/>
            <person name="Pati A."/>
            <person name="d'Haeseleer P."/>
            <person name="Woyke T."/>
            <person name="Kyrpides N.C."/>
        </authorList>
    </citation>
    <scope>NUCLEOTIDE SEQUENCE [LARGE SCALE GENOMIC DNA]</scope>
    <source>
        <strain>HL-EbGR7</strain>
    </source>
</reference>